<proteinExistence type="inferred from homology"/>
<organism>
    <name type="scientific">Bifidobacterium longum subsp. infantis (strain ATCC 15697 / DSM 20088 / JCM 1222 / NCTC 11817 / S12)</name>
    <dbReference type="NCBI Taxonomy" id="391904"/>
    <lineage>
        <taxon>Bacteria</taxon>
        <taxon>Bacillati</taxon>
        <taxon>Actinomycetota</taxon>
        <taxon>Actinomycetes</taxon>
        <taxon>Bifidobacteriales</taxon>
        <taxon>Bifidobacteriaceae</taxon>
        <taxon>Bifidobacterium</taxon>
    </lineage>
</organism>
<evidence type="ECO:0000255" key="1">
    <source>
        <dbReference type="HAMAP-Rule" id="MF_01366"/>
    </source>
</evidence>
<evidence type="ECO:0000305" key="2"/>
<accession>B7GNE8</accession>
<accession>E8MN91</accession>
<keyword id="KW-0687">Ribonucleoprotein</keyword>
<keyword id="KW-0689">Ribosomal protein</keyword>
<gene>
    <name evidence="1" type="primary">rplM</name>
    <name type="ordered locus">Blon_2245</name>
    <name type="ordered locus">BLIJ_2317</name>
</gene>
<feature type="chain" id="PRO_1000166852" description="Large ribosomal subunit protein uL13">
    <location>
        <begin position="1"/>
        <end position="149"/>
    </location>
</feature>
<dbReference type="EMBL" id="CP001095">
    <property type="protein sequence ID" value="ACJ53304.1"/>
    <property type="molecule type" value="Genomic_DNA"/>
</dbReference>
<dbReference type="EMBL" id="AP010889">
    <property type="protein sequence ID" value="BAJ69894.1"/>
    <property type="molecule type" value="Genomic_DNA"/>
</dbReference>
<dbReference type="RefSeq" id="WP_012578480.1">
    <property type="nucleotide sequence ID" value="NC_011593.1"/>
</dbReference>
<dbReference type="SMR" id="B7GNE8"/>
<dbReference type="KEGG" id="bln:Blon_2245"/>
<dbReference type="KEGG" id="blon:BLIJ_2317"/>
<dbReference type="PATRIC" id="fig|391904.8.peg.2319"/>
<dbReference type="HOGENOM" id="CLU_082184_2_1_11"/>
<dbReference type="Proteomes" id="UP000001360">
    <property type="component" value="Chromosome"/>
</dbReference>
<dbReference type="GO" id="GO:0022625">
    <property type="term" value="C:cytosolic large ribosomal subunit"/>
    <property type="evidence" value="ECO:0007669"/>
    <property type="project" value="TreeGrafter"/>
</dbReference>
<dbReference type="GO" id="GO:0003729">
    <property type="term" value="F:mRNA binding"/>
    <property type="evidence" value="ECO:0007669"/>
    <property type="project" value="TreeGrafter"/>
</dbReference>
<dbReference type="GO" id="GO:0003735">
    <property type="term" value="F:structural constituent of ribosome"/>
    <property type="evidence" value="ECO:0007669"/>
    <property type="project" value="InterPro"/>
</dbReference>
<dbReference type="GO" id="GO:0017148">
    <property type="term" value="P:negative regulation of translation"/>
    <property type="evidence" value="ECO:0007669"/>
    <property type="project" value="TreeGrafter"/>
</dbReference>
<dbReference type="GO" id="GO:0006412">
    <property type="term" value="P:translation"/>
    <property type="evidence" value="ECO:0007669"/>
    <property type="project" value="UniProtKB-UniRule"/>
</dbReference>
<dbReference type="CDD" id="cd00392">
    <property type="entry name" value="Ribosomal_L13"/>
    <property type="match status" value="1"/>
</dbReference>
<dbReference type="FunFam" id="3.90.1180.10:FF:000001">
    <property type="entry name" value="50S ribosomal protein L13"/>
    <property type="match status" value="1"/>
</dbReference>
<dbReference type="Gene3D" id="3.90.1180.10">
    <property type="entry name" value="Ribosomal protein L13"/>
    <property type="match status" value="1"/>
</dbReference>
<dbReference type="HAMAP" id="MF_01366">
    <property type="entry name" value="Ribosomal_uL13"/>
    <property type="match status" value="1"/>
</dbReference>
<dbReference type="InterPro" id="IPR005822">
    <property type="entry name" value="Ribosomal_uL13"/>
</dbReference>
<dbReference type="InterPro" id="IPR005823">
    <property type="entry name" value="Ribosomal_uL13_bac-type"/>
</dbReference>
<dbReference type="InterPro" id="IPR036899">
    <property type="entry name" value="Ribosomal_uL13_sf"/>
</dbReference>
<dbReference type="NCBIfam" id="TIGR01066">
    <property type="entry name" value="rplM_bact"/>
    <property type="match status" value="1"/>
</dbReference>
<dbReference type="PANTHER" id="PTHR11545:SF2">
    <property type="entry name" value="LARGE RIBOSOMAL SUBUNIT PROTEIN UL13M"/>
    <property type="match status" value="1"/>
</dbReference>
<dbReference type="PANTHER" id="PTHR11545">
    <property type="entry name" value="RIBOSOMAL PROTEIN L13"/>
    <property type="match status" value="1"/>
</dbReference>
<dbReference type="Pfam" id="PF00572">
    <property type="entry name" value="Ribosomal_L13"/>
    <property type="match status" value="1"/>
</dbReference>
<dbReference type="PIRSF" id="PIRSF002181">
    <property type="entry name" value="Ribosomal_L13"/>
    <property type="match status" value="1"/>
</dbReference>
<dbReference type="SUPFAM" id="SSF52161">
    <property type="entry name" value="Ribosomal protein L13"/>
    <property type="match status" value="1"/>
</dbReference>
<reference key="1">
    <citation type="journal article" date="2008" name="Proc. Natl. Acad. Sci. U.S.A.">
        <title>The genome sequence of Bifidobacterium longum subsp. infantis reveals adaptations for milk utilization within the infant microbiome.</title>
        <authorList>
            <person name="Sela D.A."/>
            <person name="Chapman J."/>
            <person name="Adeuya A."/>
            <person name="Kim J.H."/>
            <person name="Chen F."/>
            <person name="Whitehead T.R."/>
            <person name="Lapidus A."/>
            <person name="Rokhsar D.S."/>
            <person name="Lebrilla C.B."/>
            <person name="German J.B."/>
            <person name="Price N.P."/>
            <person name="Richardson P.M."/>
            <person name="Mills D.A."/>
        </authorList>
    </citation>
    <scope>NUCLEOTIDE SEQUENCE [LARGE SCALE GENOMIC DNA]</scope>
    <source>
        <strain>ATCC 15697 / DSM 20088 / JCM 1222 / NCTC 11817 / S12</strain>
    </source>
</reference>
<reference key="2">
    <citation type="journal article" date="2011" name="Nature">
        <title>Bifidobacteria can protect from enteropathogenic infection through production of acetate.</title>
        <authorList>
            <person name="Fukuda S."/>
            <person name="Toh H."/>
            <person name="Hase K."/>
            <person name="Oshima K."/>
            <person name="Nakanishi Y."/>
            <person name="Yoshimura K."/>
            <person name="Tobe T."/>
            <person name="Clarke J.M."/>
            <person name="Topping D.L."/>
            <person name="Suzuki T."/>
            <person name="Taylor T.D."/>
            <person name="Itoh K."/>
            <person name="Kikuchi J."/>
            <person name="Morita H."/>
            <person name="Hattori M."/>
            <person name="Ohno H."/>
        </authorList>
    </citation>
    <scope>NUCLEOTIDE SEQUENCE [LARGE SCALE GENOMIC DNA]</scope>
    <source>
        <strain>ATCC 15697 / DSM 20088 / JCM 1222 / NCTC 11817 / S12</strain>
    </source>
</reference>
<name>RL13_BIFLS</name>
<protein>
    <recommendedName>
        <fullName evidence="1">Large ribosomal subunit protein uL13</fullName>
    </recommendedName>
    <alternativeName>
        <fullName evidence="2">50S ribosomal protein L13</fullName>
    </alternativeName>
</protein>
<sequence length="149" mass="16595">MKTFTPKPADLTHDWYVIDATDVVLGRLATQAAVLLRGKNKPTYAPHADSGNHVIIINADKIALTGNKMGKELYSHSGRPGGLRRDSYAELLEKNPERIIKNAVKGMLPKNRLAKVQLDRLRVFRGAEHPHTPQKPQVFEIAQVSQQAK</sequence>
<comment type="function">
    <text evidence="1">This protein is one of the early assembly proteins of the 50S ribosomal subunit, although it is not seen to bind rRNA by itself. It is important during the early stages of 50S assembly.</text>
</comment>
<comment type="subunit">
    <text evidence="1">Part of the 50S ribosomal subunit.</text>
</comment>
<comment type="similarity">
    <text evidence="1">Belongs to the universal ribosomal protein uL13 family.</text>
</comment>